<gene>
    <name type="primary">Lcn12</name>
</gene>
<organism>
    <name type="scientific">Rattus norvegicus</name>
    <name type="common">Rat</name>
    <dbReference type="NCBI Taxonomy" id="10116"/>
    <lineage>
        <taxon>Eukaryota</taxon>
        <taxon>Metazoa</taxon>
        <taxon>Chordata</taxon>
        <taxon>Craniata</taxon>
        <taxon>Vertebrata</taxon>
        <taxon>Euteleostomi</taxon>
        <taxon>Mammalia</taxon>
        <taxon>Eutheria</taxon>
        <taxon>Euarchontoglires</taxon>
        <taxon>Glires</taxon>
        <taxon>Rodentia</taxon>
        <taxon>Myomorpha</taxon>
        <taxon>Muroidea</taxon>
        <taxon>Muridae</taxon>
        <taxon>Murinae</taxon>
        <taxon>Rattus</taxon>
    </lineage>
</organism>
<sequence length="193" mass="22222">MGPWWALWLILTLPQILGGQSPTMPQGFSQMTSFQSNKFQGEWFVLGLADNTYKREHRPLLHSFITLFKLRDNSEFQVTNSMTRGKHCSTWSYTLIPTNKPGQFTRDNRGSGPGADKENIQVIETDYVKFALVLSLRQASNQNITRVSLLGRDWKITHKTIDRFICLTKTQNLTKNNLLFPDLTDWLLDPKVC</sequence>
<protein>
    <recommendedName>
        <fullName>Epididymal-specific lipocalin-12</fullName>
    </recommendedName>
</protein>
<evidence type="ECO:0000250" key="1"/>
<evidence type="ECO:0000255" key="2"/>
<evidence type="ECO:0000269" key="3">
    <source>
    </source>
</evidence>
<evidence type="ECO:0000269" key="4">
    <source>
    </source>
</evidence>
<evidence type="ECO:0000305" key="5"/>
<evidence type="ECO:0007829" key="6">
    <source>
        <dbReference type="PDB" id="2L5P"/>
    </source>
</evidence>
<name>LCN12_RAT</name>
<reference key="1">
    <citation type="submission" date="2006-05" db="EMBL/GenBank/DDBJ databases">
        <authorList>
            <person name="Liu Q."/>
            <person name="Chen W."/>
            <person name="Guo C."/>
            <person name="Lin D."/>
            <person name="Zhang Y.-L."/>
        </authorList>
    </citation>
    <scope>NUCLEOTIDE SEQUENCE [MRNA]</scope>
    <source>
        <strain>Sprague-Dawley</strain>
    </source>
</reference>
<reference key="2">
    <citation type="journal article" date="2004" name="Nature">
        <title>Genome sequence of the Brown Norway rat yields insights into mammalian evolution.</title>
        <authorList>
            <person name="Gibbs R.A."/>
            <person name="Weinstock G.M."/>
            <person name="Metzker M.L."/>
            <person name="Muzny D.M."/>
            <person name="Sodergren E.J."/>
            <person name="Scherer S."/>
            <person name="Scott G."/>
            <person name="Steffen D."/>
            <person name="Worley K.C."/>
            <person name="Burch P.E."/>
            <person name="Okwuonu G."/>
            <person name="Hines S."/>
            <person name="Lewis L."/>
            <person name="Deramo C."/>
            <person name="Delgado O."/>
            <person name="Dugan-Rocha S."/>
            <person name="Miner G."/>
            <person name="Morgan M."/>
            <person name="Hawes A."/>
            <person name="Gill R."/>
            <person name="Holt R.A."/>
            <person name="Adams M.D."/>
            <person name="Amanatides P.G."/>
            <person name="Baden-Tillson H."/>
            <person name="Barnstead M."/>
            <person name="Chin S."/>
            <person name="Evans C.A."/>
            <person name="Ferriera S."/>
            <person name="Fosler C."/>
            <person name="Glodek A."/>
            <person name="Gu Z."/>
            <person name="Jennings D."/>
            <person name="Kraft C.L."/>
            <person name="Nguyen T."/>
            <person name="Pfannkoch C.M."/>
            <person name="Sitter C."/>
            <person name="Sutton G.G."/>
            <person name="Venter J.C."/>
            <person name="Woodage T."/>
            <person name="Smith D."/>
            <person name="Lee H.-M."/>
            <person name="Gustafson E."/>
            <person name="Cahill P."/>
            <person name="Kana A."/>
            <person name="Doucette-Stamm L."/>
            <person name="Weinstock K."/>
            <person name="Fechtel K."/>
            <person name="Weiss R.B."/>
            <person name="Dunn D.M."/>
            <person name="Green E.D."/>
            <person name="Blakesley R.W."/>
            <person name="Bouffard G.G."/>
            <person name="De Jong P.J."/>
            <person name="Osoegawa K."/>
            <person name="Zhu B."/>
            <person name="Marra M."/>
            <person name="Schein J."/>
            <person name="Bosdet I."/>
            <person name="Fjell C."/>
            <person name="Jones S."/>
            <person name="Krzywinski M."/>
            <person name="Mathewson C."/>
            <person name="Siddiqui A."/>
            <person name="Wye N."/>
            <person name="McPherson J."/>
            <person name="Zhao S."/>
            <person name="Fraser C.M."/>
            <person name="Shetty J."/>
            <person name="Shatsman S."/>
            <person name="Geer K."/>
            <person name="Chen Y."/>
            <person name="Abramzon S."/>
            <person name="Nierman W.C."/>
            <person name="Havlak P.H."/>
            <person name="Chen R."/>
            <person name="Durbin K.J."/>
            <person name="Egan A."/>
            <person name="Ren Y."/>
            <person name="Song X.-Z."/>
            <person name="Li B."/>
            <person name="Liu Y."/>
            <person name="Qin X."/>
            <person name="Cawley S."/>
            <person name="Cooney A.J."/>
            <person name="D'Souza L.M."/>
            <person name="Martin K."/>
            <person name="Wu J.Q."/>
            <person name="Gonzalez-Garay M.L."/>
            <person name="Jackson A.R."/>
            <person name="Kalafus K.J."/>
            <person name="McLeod M.P."/>
            <person name="Milosavljevic A."/>
            <person name="Virk D."/>
            <person name="Volkov A."/>
            <person name="Wheeler D.A."/>
            <person name="Zhang Z."/>
            <person name="Bailey J.A."/>
            <person name="Eichler E.E."/>
            <person name="Tuzun E."/>
            <person name="Birney E."/>
            <person name="Mongin E."/>
            <person name="Ureta-Vidal A."/>
            <person name="Woodwark C."/>
            <person name="Zdobnov E."/>
            <person name="Bork P."/>
            <person name="Suyama M."/>
            <person name="Torrents D."/>
            <person name="Alexandersson M."/>
            <person name="Trask B.J."/>
            <person name="Young J.M."/>
            <person name="Huang H."/>
            <person name="Wang H."/>
            <person name="Xing H."/>
            <person name="Daniels S."/>
            <person name="Gietzen D."/>
            <person name="Schmidt J."/>
            <person name="Stevens K."/>
            <person name="Vitt U."/>
            <person name="Wingrove J."/>
            <person name="Camara F."/>
            <person name="Mar Alba M."/>
            <person name="Abril J.F."/>
            <person name="Guigo R."/>
            <person name="Smit A."/>
            <person name="Dubchak I."/>
            <person name="Rubin E.M."/>
            <person name="Couronne O."/>
            <person name="Poliakov A."/>
            <person name="Huebner N."/>
            <person name="Ganten D."/>
            <person name="Goesele C."/>
            <person name="Hummel O."/>
            <person name="Kreitler T."/>
            <person name="Lee Y.-A."/>
            <person name="Monti J."/>
            <person name="Schulz H."/>
            <person name="Zimdahl H."/>
            <person name="Himmelbauer H."/>
            <person name="Lehrach H."/>
            <person name="Jacob H.J."/>
            <person name="Bromberg S."/>
            <person name="Gullings-Handley J."/>
            <person name="Jensen-Seaman M.I."/>
            <person name="Kwitek A.E."/>
            <person name="Lazar J."/>
            <person name="Pasko D."/>
            <person name="Tonellato P.J."/>
            <person name="Twigger S."/>
            <person name="Ponting C.P."/>
            <person name="Duarte J.M."/>
            <person name="Rice S."/>
            <person name="Goodstadt L."/>
            <person name="Beatson S.A."/>
            <person name="Emes R.D."/>
            <person name="Winter E.E."/>
            <person name="Webber C."/>
            <person name="Brandt P."/>
            <person name="Nyakatura G."/>
            <person name="Adetobi M."/>
            <person name="Chiaromonte F."/>
            <person name="Elnitski L."/>
            <person name="Eswara P."/>
            <person name="Hardison R.C."/>
            <person name="Hou M."/>
            <person name="Kolbe D."/>
            <person name="Makova K."/>
            <person name="Miller W."/>
            <person name="Nekrutenko A."/>
            <person name="Riemer C."/>
            <person name="Schwartz S."/>
            <person name="Taylor J."/>
            <person name="Yang S."/>
            <person name="Zhang Y."/>
            <person name="Lindpaintner K."/>
            <person name="Andrews T.D."/>
            <person name="Caccamo M."/>
            <person name="Clamp M."/>
            <person name="Clarke L."/>
            <person name="Curwen V."/>
            <person name="Durbin R.M."/>
            <person name="Eyras E."/>
            <person name="Searle S.M."/>
            <person name="Cooper G.M."/>
            <person name="Batzoglou S."/>
            <person name="Brudno M."/>
            <person name="Sidow A."/>
            <person name="Stone E.A."/>
            <person name="Payseur B.A."/>
            <person name="Bourque G."/>
            <person name="Lopez-Otin C."/>
            <person name="Puente X.S."/>
            <person name="Chakrabarti K."/>
            <person name="Chatterji S."/>
            <person name="Dewey C."/>
            <person name="Pachter L."/>
            <person name="Bray N."/>
            <person name="Yap V.B."/>
            <person name="Caspi A."/>
            <person name="Tesler G."/>
            <person name="Pevzner P.A."/>
            <person name="Haussler D."/>
            <person name="Roskin K.M."/>
            <person name="Baertsch R."/>
            <person name="Clawson H."/>
            <person name="Furey T.S."/>
            <person name="Hinrichs A.S."/>
            <person name="Karolchik D."/>
            <person name="Kent W.J."/>
            <person name="Rosenbloom K.R."/>
            <person name="Trumbower H."/>
            <person name="Weirauch M."/>
            <person name="Cooper D.N."/>
            <person name="Stenson P.D."/>
            <person name="Ma B."/>
            <person name="Brent M."/>
            <person name="Arumugam M."/>
            <person name="Shteynberg D."/>
            <person name="Copley R.R."/>
            <person name="Taylor M.S."/>
            <person name="Riethman H."/>
            <person name="Mudunuri U."/>
            <person name="Peterson J."/>
            <person name="Guyer M."/>
            <person name="Felsenfeld A."/>
            <person name="Old S."/>
            <person name="Mockrin S."/>
            <person name="Collins F.S."/>
        </authorList>
    </citation>
    <scope>NUCLEOTIDE SEQUENCE [LARGE SCALE GENOMIC DNA]</scope>
    <source>
        <strain>Brown Norway</strain>
    </source>
</reference>
<reference key="3">
    <citation type="journal article" date="2010" name="Biochim. Biophys. Acta">
        <title>Conformational and biochemical characterization of a rat epididymis-specific lipocalin 12 expressed in Escherichia coli.</title>
        <authorList>
            <person name="Peng Y."/>
            <person name="Liu J."/>
            <person name="Liu Q."/>
            <person name="Yao Y."/>
            <person name="Guo C."/>
            <person name="Zhang Y."/>
            <person name="Lin D."/>
        </authorList>
    </citation>
    <scope>STRUCTURE BY NMR OF 19-193 OF MUTANT ALA-166</scope>
    <scope>MUTAGENESIS OF CYS-166</scope>
    <scope>FUNCTION</scope>
    <scope>SUBUNIT</scope>
    <scope>IDENTIFICATION BY MASS SPECTROMETRY</scope>
    <scope>DISULFIDE BOND</scope>
</reference>
<reference key="4">
    <citation type="journal article" date="2011" name="Proteins">
        <title>Solution structure of the protein lipocalin 12 from rat epididymis.</title>
        <authorList>
            <person name="Peng Y."/>
            <person name="Zhang X."/>
            <person name="Liu J."/>
            <person name="Liu Q."/>
            <person name="Guo C."/>
            <person name="Zhang Y."/>
            <person name="Lin D."/>
        </authorList>
    </citation>
    <scope>STRUCTURE BY NMR OF 19-193 OF MUTANT ALA-166</scope>
    <scope>MUTAGENESIS OF CYS-166</scope>
    <scope>DISULFIDE BOND</scope>
</reference>
<proteinExistence type="evidence at protein level"/>
<accession>B3EY83</accession>
<accession>D3ZI71</accession>
<comment type="function">
    <text evidence="3">Binds all-trans retinoic acid and may act as a retinoid carrier protein within the epididymis. May play a role in male fertility.</text>
</comment>
<comment type="subunit">
    <text evidence="3">Monomer.</text>
</comment>
<comment type="subcellular location">
    <subcellularLocation>
        <location evidence="1">Secreted</location>
    </subcellularLocation>
</comment>
<comment type="similarity">
    <text evidence="5">Belongs to the calycin superfamily. Lipocalin family.</text>
</comment>
<comment type="sequence caution" evidence="5">
    <conflict type="erroneous initiation">
        <sequence resource="EMBL-CDS" id="ABG24235"/>
    </conflict>
    <text>Extended N-terminus.</text>
</comment>
<dbReference type="EMBL" id="DQ537492">
    <property type="protein sequence ID" value="ABG24235.1"/>
    <property type="status" value="ALT_INIT"/>
    <property type="molecule type" value="mRNA"/>
</dbReference>
<dbReference type="RefSeq" id="NP_001382003.1">
    <property type="nucleotide sequence ID" value="NM_001395074.1"/>
</dbReference>
<dbReference type="PDB" id="2L5P">
    <property type="method" value="NMR"/>
    <property type="chains" value="A=19-193"/>
</dbReference>
<dbReference type="PDBsum" id="2L5P"/>
<dbReference type="BMRB" id="B3EY83"/>
<dbReference type="SMR" id="B3EY83"/>
<dbReference type="FunCoup" id="B3EY83">
    <property type="interactions" value="38"/>
</dbReference>
<dbReference type="STRING" id="10116.ENSRNOP00000020997"/>
<dbReference type="GlyCosmos" id="B3EY83">
    <property type="glycosylation" value="2 sites, No reported glycans"/>
</dbReference>
<dbReference type="GlyGen" id="B3EY83">
    <property type="glycosylation" value="2 sites"/>
</dbReference>
<dbReference type="PaxDb" id="10116-ENSRNOP00000020997"/>
<dbReference type="Ensembl" id="ENSRNOT00000020997.6">
    <property type="protein sequence ID" value="ENSRNOP00000020997.6"/>
    <property type="gene ID" value="ENSRNOG00000028701.7"/>
</dbReference>
<dbReference type="GeneID" id="680602"/>
<dbReference type="UCSC" id="RGD:1589474">
    <property type="organism name" value="rat"/>
</dbReference>
<dbReference type="AGR" id="RGD:1589474"/>
<dbReference type="RGD" id="1589474">
    <property type="gene designation" value="Lcn12"/>
</dbReference>
<dbReference type="eggNOG" id="ENOG502S9R9">
    <property type="taxonomic scope" value="Eukaryota"/>
</dbReference>
<dbReference type="GeneTree" id="ENSGT00440000034309"/>
<dbReference type="InParanoid" id="B3EY83"/>
<dbReference type="OMA" id="RCDTWSY"/>
<dbReference type="Reactome" id="R-RNO-804914">
    <property type="pathway name" value="Transport of fatty acids"/>
</dbReference>
<dbReference type="EvolutionaryTrace" id="B3EY83"/>
<dbReference type="PRO" id="PR:B3EY83"/>
<dbReference type="Proteomes" id="UP000002494">
    <property type="component" value="Chromosome 3"/>
</dbReference>
<dbReference type="GO" id="GO:0005615">
    <property type="term" value="C:extracellular space"/>
    <property type="evidence" value="ECO:0000318"/>
    <property type="project" value="GO_Central"/>
</dbReference>
<dbReference type="GO" id="GO:0001972">
    <property type="term" value="F:retinoic acid binding"/>
    <property type="evidence" value="ECO:0000314"/>
    <property type="project" value="UniProtKB"/>
</dbReference>
<dbReference type="CDD" id="cd19458">
    <property type="entry name" value="lipocalin_12"/>
    <property type="match status" value="1"/>
</dbReference>
<dbReference type="FunFam" id="2.40.128.20:FF:000023">
    <property type="entry name" value="Epididymal-specific lipocalin-12"/>
    <property type="match status" value="1"/>
</dbReference>
<dbReference type="Gene3D" id="2.40.128.20">
    <property type="match status" value="1"/>
</dbReference>
<dbReference type="InterPro" id="IPR012674">
    <property type="entry name" value="Calycin"/>
</dbReference>
<dbReference type="InterPro" id="IPR003087">
    <property type="entry name" value="LCN2/LCN12"/>
</dbReference>
<dbReference type="InterPro" id="IPR002345">
    <property type="entry name" value="Lipocalin"/>
</dbReference>
<dbReference type="InterPro" id="IPR000566">
    <property type="entry name" value="Lipocln_cytosolic_FA-bd_dom"/>
</dbReference>
<dbReference type="PANTHER" id="PTHR11430:SF12">
    <property type="entry name" value="EPIDIDYMAL-SPECIFIC LIPOCALIN-12"/>
    <property type="match status" value="1"/>
</dbReference>
<dbReference type="PANTHER" id="PTHR11430">
    <property type="entry name" value="LIPOCALIN"/>
    <property type="match status" value="1"/>
</dbReference>
<dbReference type="Pfam" id="PF00061">
    <property type="entry name" value="Lipocalin"/>
    <property type="match status" value="1"/>
</dbReference>
<dbReference type="PRINTS" id="PR01275">
    <property type="entry name" value="NGELATINASE"/>
</dbReference>
<dbReference type="SUPFAM" id="SSF50814">
    <property type="entry name" value="Lipocalins"/>
    <property type="match status" value="1"/>
</dbReference>
<feature type="signal peptide" evidence="2">
    <location>
        <begin position="1"/>
        <end position="19"/>
    </location>
</feature>
<feature type="chain" id="PRO_0000415891" description="Epididymal-specific lipocalin-12">
    <location>
        <begin position="20"/>
        <end position="193"/>
    </location>
</feature>
<feature type="glycosylation site" description="N-linked (GlcNAc...) asparagine" evidence="2">
    <location>
        <position position="143"/>
    </location>
</feature>
<feature type="glycosylation site" description="N-linked (GlcNAc...) asparagine" evidence="2">
    <location>
        <position position="172"/>
    </location>
</feature>
<feature type="disulfide bond" evidence="3 4">
    <location>
        <begin position="88"/>
        <end position="193"/>
    </location>
</feature>
<feature type="mutagenesis site" description="Abolishes intermolecular disulfide bond formation." evidence="3 4">
    <original>C</original>
    <variation>A</variation>
    <location>
        <position position="166"/>
    </location>
</feature>
<feature type="strand" evidence="6">
    <location>
        <begin position="26"/>
        <end position="28"/>
    </location>
</feature>
<feature type="helix" evidence="6">
    <location>
        <begin position="36"/>
        <end position="39"/>
    </location>
</feature>
<feature type="strand" evidence="6">
    <location>
        <begin position="41"/>
        <end position="50"/>
    </location>
</feature>
<feature type="strand" evidence="6">
    <location>
        <begin position="60"/>
        <end position="62"/>
    </location>
</feature>
<feature type="strand" evidence="6">
    <location>
        <begin position="65"/>
        <end position="70"/>
    </location>
</feature>
<feature type="strand" evidence="6">
    <location>
        <begin position="72"/>
        <end position="74"/>
    </location>
</feature>
<feature type="strand" evidence="6">
    <location>
        <begin position="76"/>
        <end position="84"/>
    </location>
</feature>
<feature type="strand" evidence="6">
    <location>
        <begin position="87"/>
        <end position="97"/>
    </location>
</feature>
<feature type="strand" evidence="6">
    <location>
        <begin position="103"/>
        <end position="106"/>
    </location>
</feature>
<feature type="strand" evidence="6">
    <location>
        <begin position="118"/>
        <end position="126"/>
    </location>
</feature>
<feature type="turn" evidence="6">
    <location>
        <begin position="127"/>
        <end position="129"/>
    </location>
</feature>
<feature type="strand" evidence="6">
    <location>
        <begin position="130"/>
        <end position="138"/>
    </location>
</feature>
<feature type="strand" evidence="6">
    <location>
        <begin position="143"/>
        <end position="154"/>
    </location>
</feature>
<feature type="helix" evidence="6">
    <location>
        <begin position="158"/>
        <end position="170"/>
    </location>
</feature>
<feature type="helix" evidence="6">
    <location>
        <begin position="175"/>
        <end position="177"/>
    </location>
</feature>
<feature type="strand" evidence="6">
    <location>
        <begin position="189"/>
        <end position="191"/>
    </location>
</feature>
<keyword id="KW-0002">3D-structure</keyword>
<keyword id="KW-1015">Disulfide bond</keyword>
<keyword id="KW-0325">Glycoprotein</keyword>
<keyword id="KW-1185">Reference proteome</keyword>
<keyword id="KW-0964">Secreted</keyword>
<keyword id="KW-0732">Signal</keyword>
<keyword id="KW-0813">Transport</keyword>